<sequence>MPRRRRRRGSSGAGGRGRTCSRTVRAELSFSVSQVERSLREGHYAQRLSRTAPVYLAAVIEYLTAKVLELAGNEAQNSGERNITPLLLDMVVHNDRLLSTLFNTTTISQVAPGED</sequence>
<protein>
    <recommendedName>
        <fullName>Histone H2A-Bbd type 2/3</fullName>
    </recommendedName>
    <alternativeName>
        <fullName>H2A Barr body-deficient</fullName>
        <shortName>H2A.Bbd</shortName>
    </alternativeName>
</protein>
<evidence type="ECO:0000256" key="1">
    <source>
        <dbReference type="SAM" id="MobiDB-lite"/>
    </source>
</evidence>
<evidence type="ECO:0000269" key="2">
    <source>
    </source>
</evidence>
<evidence type="ECO:0000269" key="3">
    <source>
    </source>
</evidence>
<evidence type="ECO:0000269" key="4">
    <source>
    </source>
</evidence>
<evidence type="ECO:0000269" key="5">
    <source>
    </source>
</evidence>
<evidence type="ECO:0000269" key="6">
    <source>
    </source>
</evidence>
<evidence type="ECO:0000269" key="7">
    <source>
    </source>
</evidence>
<evidence type="ECO:0000269" key="8">
    <source>
    </source>
</evidence>
<evidence type="ECO:0000269" key="9">
    <source>
    </source>
</evidence>
<evidence type="ECO:0000305" key="10"/>
<evidence type="ECO:0000312" key="11">
    <source>
        <dbReference type="HGNC" id="HGNC:14455"/>
    </source>
</evidence>
<evidence type="ECO:0000312" key="12">
    <source>
        <dbReference type="HGNC" id="HGNC:18298"/>
    </source>
</evidence>
<evidence type="ECO:0007829" key="13">
    <source>
        <dbReference type="PDB" id="6A7U"/>
    </source>
</evidence>
<evidence type="ECO:0007829" key="14">
    <source>
        <dbReference type="PDB" id="6M4G"/>
    </source>
</evidence>
<feature type="chain" id="PRO_0000055321" description="Histone H2A-Bbd type 2/3">
    <location>
        <begin position="1"/>
        <end position="115"/>
    </location>
</feature>
<feature type="region of interest" description="Disordered" evidence="1">
    <location>
        <begin position="1"/>
        <end position="21"/>
    </location>
</feature>
<feature type="region of interest" description="Docking domain">
    <location>
        <begin position="87"/>
        <end position="115"/>
    </location>
</feature>
<feature type="helix" evidence="13">
    <location>
        <begin position="22"/>
        <end position="26"/>
    </location>
</feature>
<feature type="helix" evidence="13">
    <location>
        <begin position="32"/>
        <end position="41"/>
    </location>
</feature>
<feature type="strand" evidence="13">
    <location>
        <begin position="45"/>
        <end position="48"/>
    </location>
</feature>
<feature type="helix" evidence="13">
    <location>
        <begin position="51"/>
        <end position="77"/>
    </location>
</feature>
<feature type="strand" evidence="13">
    <location>
        <begin position="81"/>
        <end position="83"/>
    </location>
</feature>
<feature type="helix" evidence="13">
    <location>
        <begin position="85"/>
        <end position="92"/>
    </location>
</feature>
<feature type="strand" evidence="13">
    <location>
        <begin position="93"/>
        <end position="95"/>
    </location>
</feature>
<feature type="helix" evidence="13">
    <location>
        <begin position="98"/>
        <end position="100"/>
    </location>
</feature>
<feature type="strand" evidence="14">
    <location>
        <begin position="103"/>
        <end position="107"/>
    </location>
</feature>
<reference key="1">
    <citation type="journal article" date="2001" name="J. Cell Biol.">
        <title>A novel chromatin protein, distantly related to histone H2A, is largely excluded from the inactive X chromosome.</title>
        <authorList>
            <person name="Chadwick B.P."/>
            <person name="Willard H.F."/>
        </authorList>
    </citation>
    <scope>NUCLEOTIDE SEQUENCE [MRNA]</scope>
    <scope>SUBCELLULAR LOCATION</scope>
</reference>
<reference key="2">
    <citation type="journal article" date="2005" name="Nature">
        <title>The DNA sequence of the human X chromosome.</title>
        <authorList>
            <person name="Ross M.T."/>
            <person name="Grafham D.V."/>
            <person name="Coffey A.J."/>
            <person name="Scherer S."/>
            <person name="McLay K."/>
            <person name="Muzny D."/>
            <person name="Platzer M."/>
            <person name="Howell G.R."/>
            <person name="Burrows C."/>
            <person name="Bird C.P."/>
            <person name="Frankish A."/>
            <person name="Lovell F.L."/>
            <person name="Howe K.L."/>
            <person name="Ashurst J.L."/>
            <person name="Fulton R.S."/>
            <person name="Sudbrak R."/>
            <person name="Wen G."/>
            <person name="Jones M.C."/>
            <person name="Hurles M.E."/>
            <person name="Andrews T.D."/>
            <person name="Scott C.E."/>
            <person name="Searle S."/>
            <person name="Ramser J."/>
            <person name="Whittaker A."/>
            <person name="Deadman R."/>
            <person name="Carter N.P."/>
            <person name="Hunt S.E."/>
            <person name="Chen R."/>
            <person name="Cree A."/>
            <person name="Gunaratne P."/>
            <person name="Havlak P."/>
            <person name="Hodgson A."/>
            <person name="Metzker M.L."/>
            <person name="Richards S."/>
            <person name="Scott G."/>
            <person name="Steffen D."/>
            <person name="Sodergren E."/>
            <person name="Wheeler D.A."/>
            <person name="Worley K.C."/>
            <person name="Ainscough R."/>
            <person name="Ambrose K.D."/>
            <person name="Ansari-Lari M.A."/>
            <person name="Aradhya S."/>
            <person name="Ashwell R.I."/>
            <person name="Babbage A.K."/>
            <person name="Bagguley C.L."/>
            <person name="Ballabio A."/>
            <person name="Banerjee R."/>
            <person name="Barker G.E."/>
            <person name="Barlow K.F."/>
            <person name="Barrett I.P."/>
            <person name="Bates K.N."/>
            <person name="Beare D.M."/>
            <person name="Beasley H."/>
            <person name="Beasley O."/>
            <person name="Beck A."/>
            <person name="Bethel G."/>
            <person name="Blechschmidt K."/>
            <person name="Brady N."/>
            <person name="Bray-Allen S."/>
            <person name="Bridgeman A.M."/>
            <person name="Brown A.J."/>
            <person name="Brown M.J."/>
            <person name="Bonnin D."/>
            <person name="Bruford E.A."/>
            <person name="Buhay C."/>
            <person name="Burch P."/>
            <person name="Burford D."/>
            <person name="Burgess J."/>
            <person name="Burrill W."/>
            <person name="Burton J."/>
            <person name="Bye J.M."/>
            <person name="Carder C."/>
            <person name="Carrel L."/>
            <person name="Chako J."/>
            <person name="Chapman J.C."/>
            <person name="Chavez D."/>
            <person name="Chen E."/>
            <person name="Chen G."/>
            <person name="Chen Y."/>
            <person name="Chen Z."/>
            <person name="Chinault C."/>
            <person name="Ciccodicola A."/>
            <person name="Clark S.Y."/>
            <person name="Clarke G."/>
            <person name="Clee C.M."/>
            <person name="Clegg S."/>
            <person name="Clerc-Blankenburg K."/>
            <person name="Clifford K."/>
            <person name="Cobley V."/>
            <person name="Cole C.G."/>
            <person name="Conquer J.S."/>
            <person name="Corby N."/>
            <person name="Connor R.E."/>
            <person name="David R."/>
            <person name="Davies J."/>
            <person name="Davis C."/>
            <person name="Davis J."/>
            <person name="Delgado O."/>
            <person name="Deshazo D."/>
            <person name="Dhami P."/>
            <person name="Ding Y."/>
            <person name="Dinh H."/>
            <person name="Dodsworth S."/>
            <person name="Draper H."/>
            <person name="Dugan-Rocha S."/>
            <person name="Dunham A."/>
            <person name="Dunn M."/>
            <person name="Durbin K.J."/>
            <person name="Dutta I."/>
            <person name="Eades T."/>
            <person name="Ellwood M."/>
            <person name="Emery-Cohen A."/>
            <person name="Errington H."/>
            <person name="Evans K.L."/>
            <person name="Faulkner L."/>
            <person name="Francis F."/>
            <person name="Frankland J."/>
            <person name="Fraser A.E."/>
            <person name="Galgoczy P."/>
            <person name="Gilbert J."/>
            <person name="Gill R."/>
            <person name="Gloeckner G."/>
            <person name="Gregory S.G."/>
            <person name="Gribble S."/>
            <person name="Griffiths C."/>
            <person name="Grocock R."/>
            <person name="Gu Y."/>
            <person name="Gwilliam R."/>
            <person name="Hamilton C."/>
            <person name="Hart E.A."/>
            <person name="Hawes A."/>
            <person name="Heath P.D."/>
            <person name="Heitmann K."/>
            <person name="Hennig S."/>
            <person name="Hernandez J."/>
            <person name="Hinzmann B."/>
            <person name="Ho S."/>
            <person name="Hoffs M."/>
            <person name="Howden P.J."/>
            <person name="Huckle E.J."/>
            <person name="Hume J."/>
            <person name="Hunt P.J."/>
            <person name="Hunt A.R."/>
            <person name="Isherwood J."/>
            <person name="Jacob L."/>
            <person name="Johnson D."/>
            <person name="Jones S."/>
            <person name="de Jong P.J."/>
            <person name="Joseph S.S."/>
            <person name="Keenan S."/>
            <person name="Kelly S."/>
            <person name="Kershaw J.K."/>
            <person name="Khan Z."/>
            <person name="Kioschis P."/>
            <person name="Klages S."/>
            <person name="Knights A.J."/>
            <person name="Kosiura A."/>
            <person name="Kovar-Smith C."/>
            <person name="Laird G.K."/>
            <person name="Langford C."/>
            <person name="Lawlor S."/>
            <person name="Leversha M."/>
            <person name="Lewis L."/>
            <person name="Liu W."/>
            <person name="Lloyd C."/>
            <person name="Lloyd D.M."/>
            <person name="Loulseged H."/>
            <person name="Loveland J.E."/>
            <person name="Lovell J.D."/>
            <person name="Lozado R."/>
            <person name="Lu J."/>
            <person name="Lyne R."/>
            <person name="Ma J."/>
            <person name="Maheshwari M."/>
            <person name="Matthews L.H."/>
            <person name="McDowall J."/>
            <person name="McLaren S."/>
            <person name="McMurray A."/>
            <person name="Meidl P."/>
            <person name="Meitinger T."/>
            <person name="Milne S."/>
            <person name="Miner G."/>
            <person name="Mistry S.L."/>
            <person name="Morgan M."/>
            <person name="Morris S."/>
            <person name="Mueller I."/>
            <person name="Mullikin J.C."/>
            <person name="Nguyen N."/>
            <person name="Nordsiek G."/>
            <person name="Nyakatura G."/>
            <person name="O'dell C.N."/>
            <person name="Okwuonu G."/>
            <person name="Palmer S."/>
            <person name="Pandian R."/>
            <person name="Parker D."/>
            <person name="Parrish J."/>
            <person name="Pasternak S."/>
            <person name="Patel D."/>
            <person name="Pearce A.V."/>
            <person name="Pearson D.M."/>
            <person name="Pelan S.E."/>
            <person name="Perez L."/>
            <person name="Porter K.M."/>
            <person name="Ramsey Y."/>
            <person name="Reichwald K."/>
            <person name="Rhodes S."/>
            <person name="Ridler K.A."/>
            <person name="Schlessinger D."/>
            <person name="Schueler M.G."/>
            <person name="Sehra H.K."/>
            <person name="Shaw-Smith C."/>
            <person name="Shen H."/>
            <person name="Sheridan E.M."/>
            <person name="Shownkeen R."/>
            <person name="Skuce C.D."/>
            <person name="Smith M.L."/>
            <person name="Sotheran E.C."/>
            <person name="Steingruber H.E."/>
            <person name="Steward C.A."/>
            <person name="Storey R."/>
            <person name="Swann R.M."/>
            <person name="Swarbreck D."/>
            <person name="Tabor P.E."/>
            <person name="Taudien S."/>
            <person name="Taylor T."/>
            <person name="Teague B."/>
            <person name="Thomas K."/>
            <person name="Thorpe A."/>
            <person name="Timms K."/>
            <person name="Tracey A."/>
            <person name="Trevanion S."/>
            <person name="Tromans A.C."/>
            <person name="d'Urso M."/>
            <person name="Verduzco D."/>
            <person name="Villasana D."/>
            <person name="Waldron L."/>
            <person name="Wall M."/>
            <person name="Wang Q."/>
            <person name="Warren J."/>
            <person name="Warry G.L."/>
            <person name="Wei X."/>
            <person name="West A."/>
            <person name="Whitehead S.L."/>
            <person name="Whiteley M.N."/>
            <person name="Wilkinson J.E."/>
            <person name="Willey D.L."/>
            <person name="Williams G."/>
            <person name="Williams L."/>
            <person name="Williamson A."/>
            <person name="Williamson H."/>
            <person name="Wilming L."/>
            <person name="Woodmansey R.L."/>
            <person name="Wray P.W."/>
            <person name="Yen J."/>
            <person name="Zhang J."/>
            <person name="Zhou J."/>
            <person name="Zoghbi H."/>
            <person name="Zorilla S."/>
            <person name="Buck D."/>
            <person name="Reinhardt R."/>
            <person name="Poustka A."/>
            <person name="Rosenthal A."/>
            <person name="Lehrach H."/>
            <person name="Meindl A."/>
            <person name="Minx P.J."/>
            <person name="Hillier L.W."/>
            <person name="Willard H.F."/>
            <person name="Wilson R.K."/>
            <person name="Waterston R.H."/>
            <person name="Rice C.M."/>
            <person name="Vaudin M."/>
            <person name="Coulson A."/>
            <person name="Nelson D.L."/>
            <person name="Weinstock G."/>
            <person name="Sulston J.E."/>
            <person name="Durbin R.M."/>
            <person name="Hubbard T."/>
            <person name="Gibbs R.A."/>
            <person name="Beck S."/>
            <person name="Rogers J."/>
            <person name="Bentley D.R."/>
        </authorList>
    </citation>
    <scope>NUCLEOTIDE SEQUENCE [LARGE SCALE GENOMIC DNA]</scope>
</reference>
<reference key="3">
    <citation type="submission" date="2005-09" db="EMBL/GenBank/DDBJ databases">
        <authorList>
            <person name="Mural R.J."/>
            <person name="Istrail S."/>
            <person name="Sutton G.G."/>
            <person name="Florea L."/>
            <person name="Halpern A.L."/>
            <person name="Mobarry C.M."/>
            <person name="Lippert R."/>
            <person name="Walenz B."/>
            <person name="Shatkay H."/>
            <person name="Dew I."/>
            <person name="Miller J.R."/>
            <person name="Flanigan M.J."/>
            <person name="Edwards N.J."/>
            <person name="Bolanos R."/>
            <person name="Fasulo D."/>
            <person name="Halldorsson B.V."/>
            <person name="Hannenhalli S."/>
            <person name="Turner R."/>
            <person name="Yooseph S."/>
            <person name="Lu F."/>
            <person name="Nusskern D.R."/>
            <person name="Shue B.C."/>
            <person name="Zheng X.H."/>
            <person name="Zhong F."/>
            <person name="Delcher A.L."/>
            <person name="Huson D.H."/>
            <person name="Kravitz S.A."/>
            <person name="Mouchard L."/>
            <person name="Reinert K."/>
            <person name="Remington K.A."/>
            <person name="Clark A.G."/>
            <person name="Waterman M.S."/>
            <person name="Eichler E.E."/>
            <person name="Adams M.D."/>
            <person name="Hunkapiller M.W."/>
            <person name="Myers E.W."/>
            <person name="Venter J.C."/>
        </authorList>
    </citation>
    <scope>NUCLEOTIDE SEQUENCE [LARGE SCALE GENOMIC DNA]</scope>
</reference>
<reference key="4">
    <citation type="journal article" date="2004" name="Genome Res.">
        <title>The status, quality, and expansion of the NIH full-length cDNA project: the Mammalian Gene Collection (MGC).</title>
        <authorList>
            <consortium name="The MGC Project Team"/>
        </authorList>
    </citation>
    <scope>NUCLEOTIDE SEQUENCE [LARGE SCALE MRNA]</scope>
</reference>
<reference key="5">
    <citation type="journal article" date="2004" name="EMBO J.">
        <title>Nucleosomes containing the histone variant H2A.Bbd organize only 118 base pairs of DNA.</title>
        <authorList>
            <person name="Bao Y."/>
            <person name="Konesky K."/>
            <person name="Park Y.-J."/>
            <person name="Rosu S."/>
            <person name="Dyer P.N."/>
            <person name="Rangasamy D."/>
            <person name="Tremethick D.J."/>
            <person name="Laybourn P.J."/>
            <person name="Luger K."/>
        </authorList>
    </citation>
    <scope>FUNCTION</scope>
    <scope>DOMAIN</scope>
</reference>
<reference key="6">
    <citation type="journal article" date="2005" name="Mol. Cell. Biol.">
        <title>Assembly and disassembly of nucleosome core particles containing histone variants by human nucleosome assembly protein I.</title>
        <authorList>
            <person name="Okuwaki M."/>
            <person name="Kato K."/>
            <person name="Shimahara H."/>
            <person name="Tate S."/>
            <person name="Nagata K."/>
        </authorList>
    </citation>
    <scope>FUNCTION</scope>
</reference>
<reference key="7">
    <citation type="journal article" date="2006" name="EMBO J.">
        <title>Dissection of the unusual structural and functional properties of the variant H2A.Bbd nucleosome.</title>
        <authorList>
            <person name="Doyen C.M."/>
            <person name="Montel F."/>
            <person name="Gautier T."/>
            <person name="Menoni H."/>
            <person name="Claudet C."/>
            <person name="Delacour-Larose M."/>
            <person name="Angelov D."/>
            <person name="Hamiche A."/>
            <person name="Bednar J."/>
            <person name="Faivre-Moskalenko C."/>
            <person name="Bouvet P."/>
            <person name="Dimitrov S."/>
        </authorList>
    </citation>
    <scope>FUNCTION</scope>
</reference>
<reference key="8">
    <citation type="journal article" date="2007" name="Mol. Cell. Biol.">
        <title>ATP-dependent chromatin remodeling is required for base excision repair in conventional but not in variant H2A.Bbd nucleosomes.</title>
        <authorList>
            <person name="Menoni H."/>
            <person name="Gasparutto D."/>
            <person name="Hamiche A."/>
            <person name="Cadet J."/>
            <person name="Dimitrov S."/>
            <person name="Bouvet P."/>
            <person name="Angelov D."/>
        </authorList>
    </citation>
    <scope>FUNCTION</scope>
</reference>
<reference key="9">
    <citation type="journal article" date="2008" name="FASEB J.">
        <title>H2A.Bbd: a quickly evolving hypervariable mammalian histone that destabilizes nucleosomes in an acetylation-independent way.</title>
        <authorList>
            <person name="Eirin-Lopez J.M."/>
            <person name="Ishibashi T."/>
            <person name="Ausio J."/>
        </authorList>
    </citation>
    <scope>FUNCTION</scope>
</reference>
<reference key="10">
    <citation type="journal article" date="2008" name="Gene">
        <title>Quickly evolving histones, nucleosome stability and chromatin folding: all about histone H2A.Bbd.</title>
        <authorList>
            <person name="Gonzalez-Romero R."/>
            <person name="Mendez J."/>
            <person name="Ausio J."/>
            <person name="Eirin-Lopez J.M."/>
        </authorList>
    </citation>
    <scope>FUNCTION</scope>
</reference>
<reference key="11">
    <citation type="journal article" date="2010" name="Nucleic Acids Res.">
        <title>H2A.Bbd: an X-chromosome-encoded histone involved in mammalian spermiogenesis.</title>
        <authorList>
            <person name="Ishibashi T."/>
            <person name="Li A."/>
            <person name="Eirin-Lopez J.M."/>
            <person name="Zhao M."/>
            <person name="Missiaen K."/>
            <person name="Abbott D.W."/>
            <person name="Meistrich M."/>
            <person name="Hendzel M.J."/>
            <person name="Ausio J."/>
        </authorList>
    </citation>
    <scope>SUBCELLULAR LOCATION</scope>
    <scope>TISSUE SPECIFICITY</scope>
</reference>
<reference key="12">
    <citation type="journal article" date="2012" name="Mol. Cell">
        <title>Histone variant H2A.Bbd is associated with active transcription and mRNA processing in human cells.</title>
        <authorList>
            <person name="Tolstorukov M.Y."/>
            <person name="Goldman J.A."/>
            <person name="Gilbert C."/>
            <person name="Ogryzko V."/>
            <person name="Kingston R.E."/>
            <person name="Park P.J."/>
        </authorList>
    </citation>
    <scope>FUNCTION</scope>
    <scope>SUBCELLULAR LOCATION</scope>
</reference>
<name>H2AB2_HUMAN</name>
<accession>P0C5Z0</accession>
<accession>A1L4E4</accession>
<accession>P98176</accession>
<accession>Q5TZB2</accession>
<accession>Q6FG78</accession>
<accession>Q96PR7</accession>
<comment type="function">
    <text evidence="2 3 4 5 6 7 9">Atypical histone H2A which can replace conventional H2A in some nucleosomes and is associated with active transcription and mRNA processing. Nucleosomes wrap and compact DNA into chromatin, limiting DNA accessibility to the cellular machineries which require DNA as a template. Histones thereby play a central role in transcription regulation, DNA repair, DNA replication and chromosomal stability. Nucleosomes containing this histone are less rigid and organize less DNA than canonical nucleosomes in vivo. They are enriched in actively transcribed genes and associate with the elongating form of RNA polymerase. They associate with spliceosome components and are required for mRNA splicing. May participate in spermatogenesis.</text>
</comment>
<comment type="subunit">
    <text>The nucleosome is a histone octamer containing two molecules each of H2A, H2B, H3 and H4 assembled in one H3-H4 heterotetramer and two H2A-H2B heterodimers. May be incorporated into a proportion of nucleosomes, replacing one or more H2A molecules.</text>
</comment>
<comment type="interaction">
    <interactant intactId="EBI-13318575">
        <id>P0C5Z0</id>
    </interactant>
    <interactant intactId="EBI-1237119">
        <id>Q99880</id>
        <label>H2BC13</label>
    </interactant>
    <organismsDiffer>false</organismsDiffer>
    <experiments>3</experiments>
</comment>
<comment type="interaction">
    <interactant intactId="EBI-13318575">
        <id>P0C5Z0</id>
    </interactant>
    <interactant intactId="EBI-12142839">
        <id>U3KQK0</id>
        <label>H2BC15</label>
    </interactant>
    <organismsDiffer>false</organismsDiffer>
    <experiments>3</experiments>
</comment>
<comment type="interaction">
    <interactant intactId="EBI-13318575">
        <id>P0C5Z0</id>
    </interactant>
    <interactant intactId="EBI-6165891">
        <id>Q14696</id>
        <label>MESD</label>
    </interactant>
    <organismsDiffer>false</organismsDiffer>
    <experiments>3</experiments>
</comment>
<comment type="subcellular location">
    <subcellularLocation>
        <location evidence="8">Nucleus</location>
    </subcellularLocation>
    <subcellularLocation>
        <location evidence="8 9">Chromosome</location>
    </subcellularLocation>
    <text evidence="8">Associated with the active X chromosome and with autosomes, while it is absent from the inactive X chromosome and excluded from Barr bodies.</text>
</comment>
<comment type="tissue specificity">
    <text evidence="8">Present in mature sperm.</text>
</comment>
<comment type="domain">
    <text evidence="2">The docking domain is responsible for the weaker heterodimerization with H2B.</text>
</comment>
<comment type="miscellaneous">
    <text>In contrast to other H2A histones, it does not contain the conserved residues that are the target of post-translational modifications.</text>
</comment>
<comment type="similarity">
    <text evidence="10">Belongs to the histone H2A family.</text>
</comment>
<comment type="online information" name="Wikipedia">
    <link uri="https://en.wikipedia.org/wiki/Histone_H2A"/>
    <text>Histone H2A entry</text>
</comment>
<proteinExistence type="evidence at protein level"/>
<gene>
    <name evidence="12" type="primary">H2AB2</name>
    <name evidence="12" type="synonym">H2AFB2</name>
</gene>
<gene>
    <name evidence="11" type="primary">H2AB3</name>
    <name type="synonym">H2ABBD</name>
    <name type="synonym">H2AFB</name>
    <name evidence="11" type="synonym">H2AFB3</name>
</gene>
<dbReference type="EMBL" id="AF254576">
    <property type="protein sequence ID" value="AAL01652.1"/>
    <property type="molecule type" value="mRNA"/>
</dbReference>
<dbReference type="EMBL" id="BX276110">
    <property type="status" value="NOT_ANNOTATED_CDS"/>
    <property type="molecule type" value="Genomic_DNA"/>
</dbReference>
<dbReference type="EMBL" id="BX682237">
    <property type="status" value="NOT_ANNOTATED_CDS"/>
    <property type="molecule type" value="Genomic_DNA"/>
</dbReference>
<dbReference type="EMBL" id="CH471172">
    <property type="protein sequence ID" value="EAW72649.1"/>
    <property type="molecule type" value="Genomic_DNA"/>
</dbReference>
<dbReference type="EMBL" id="BC101409">
    <property type="protein sequence ID" value="AAI01410.1"/>
    <property type="molecule type" value="mRNA"/>
</dbReference>
<dbReference type="EMBL" id="BC101415">
    <property type="protein sequence ID" value="AAI01416.1"/>
    <property type="molecule type" value="mRNA"/>
</dbReference>
<dbReference type="EMBL" id="BC101417">
    <property type="protein sequence ID" value="AAI01418.1"/>
    <property type="molecule type" value="mRNA"/>
</dbReference>
<dbReference type="EMBL" id="BC101418">
    <property type="protein sequence ID" value="AAI01419.1"/>
    <property type="molecule type" value="mRNA"/>
</dbReference>
<dbReference type="EMBL" id="BC130510">
    <property type="protein sequence ID" value="AAI30511.1"/>
    <property type="molecule type" value="mRNA"/>
</dbReference>
<dbReference type="EMBL" id="BC130512">
    <property type="protein sequence ID" value="AAI30513.1"/>
    <property type="molecule type" value="mRNA"/>
</dbReference>
<dbReference type="EMBL" id="BC134365">
    <property type="protein sequence ID" value="AAI34366.1"/>
    <property type="molecule type" value="mRNA"/>
</dbReference>
<dbReference type="CCDS" id="CCDS35461.1"/>
<dbReference type="CCDS" id="CCDS35464.1"/>
<dbReference type="RefSeq" id="NP_001017991.1">
    <property type="nucleotide sequence ID" value="NM_001017991.3"/>
</dbReference>
<dbReference type="RefSeq" id="NP_542451.1">
    <property type="nucleotide sequence ID" value="NM_080720.1"/>
</dbReference>
<dbReference type="PDB" id="6A7U">
    <property type="method" value="X-ray"/>
    <property type="resolution" value="2.60 A"/>
    <property type="chains" value="A=2-115"/>
</dbReference>
<dbReference type="PDB" id="6M4G">
    <property type="method" value="EM"/>
    <property type="resolution" value="2.80 A"/>
    <property type="chains" value="C/G=1-115"/>
</dbReference>
<dbReference type="PDB" id="6M4H">
    <property type="method" value="EM"/>
    <property type="resolution" value="3.90 A"/>
    <property type="chains" value="C/G=1-115"/>
</dbReference>
<dbReference type="PDBsum" id="6A7U"/>
<dbReference type="PDBsum" id="6M4G"/>
<dbReference type="PDBsum" id="6M4H"/>
<dbReference type="EMDB" id="EMD-30077"/>
<dbReference type="EMDB" id="EMD-30078"/>
<dbReference type="SMR" id="P0C5Z0"/>
<dbReference type="BioGRID" id="123748">
    <property type="interactions" value="202"/>
</dbReference>
<dbReference type="BioGRID" id="138882">
    <property type="interactions" value="148"/>
</dbReference>
<dbReference type="FunCoup" id="P0C5Z0">
    <property type="interactions" value="61"/>
</dbReference>
<dbReference type="IntAct" id="P0C5Z0">
    <property type="interactions" value="4"/>
</dbReference>
<dbReference type="STRING" id="9606.ENSP00000346509"/>
<dbReference type="iPTMnet" id="P0C5Z0"/>
<dbReference type="PhosphoSitePlus" id="P0C5Z0"/>
<dbReference type="BioMuta" id="H2AFB3"/>
<dbReference type="DMDM" id="161784333"/>
<dbReference type="jPOST" id="P0C5Z0"/>
<dbReference type="MassIVE" id="P0C5Z0"/>
<dbReference type="PaxDb" id="9606-ENSP00000346509"/>
<dbReference type="PeptideAtlas" id="P0C5Z0"/>
<dbReference type="ProteomicsDB" id="52314"/>
<dbReference type="Antibodypedia" id="72622">
    <property type="antibodies" value="13 antibodies from 2 providers"/>
</dbReference>
<dbReference type="Antibodypedia" id="75346">
    <property type="antibodies" value="2 antibodies from 2 providers"/>
</dbReference>
<dbReference type="DNASU" id="474381"/>
<dbReference type="Ensembl" id="ENST00000354514.6">
    <property type="protein sequence ID" value="ENSP00000346509.5"/>
    <property type="gene ID" value="ENSG00000277858.2"/>
</dbReference>
<dbReference type="Ensembl" id="ENST00000615853.1">
    <property type="protein sequence ID" value="ENSP00000482564.1"/>
    <property type="gene ID" value="ENSG00000277745.1"/>
</dbReference>
<dbReference type="GeneID" id="474381"/>
<dbReference type="GeneID" id="83740"/>
<dbReference type="KEGG" id="hsa:474381"/>
<dbReference type="KEGG" id="hsa:83740"/>
<dbReference type="MANE-Select" id="ENST00000354514.6">
    <property type="protein sequence ID" value="ENSP00000346509.5"/>
    <property type="RefSeq nucleotide sequence ID" value="NM_001017991.3"/>
    <property type="RefSeq protein sequence ID" value="NP_001017991.1"/>
</dbReference>
<dbReference type="MANE-Select" id="ENST00000615853.1">
    <property type="protein sequence ID" value="ENSP00000482564.1"/>
    <property type="RefSeq nucleotide sequence ID" value="NM_080720.3"/>
    <property type="RefSeq protein sequence ID" value="NP_542451.1"/>
</dbReference>
<dbReference type="UCSC" id="uc004fnh.5">
    <property type="organism name" value="human"/>
</dbReference>
<dbReference type="AGR" id="HGNC:14455"/>
<dbReference type="AGR" id="HGNC:18298"/>
<dbReference type="CTD" id="474381"/>
<dbReference type="CTD" id="83740"/>
<dbReference type="GeneCards" id="H2AB2"/>
<dbReference type="GeneCards" id="H2AB3"/>
<dbReference type="HGNC" id="HGNC:18298">
    <property type="gene designation" value="H2AB2"/>
</dbReference>
<dbReference type="HGNC" id="HGNC:14455">
    <property type="gene designation" value="H2AB3"/>
</dbReference>
<dbReference type="HPA" id="ENSG00000277745">
    <property type="expression patterns" value="Tissue enriched (testis)"/>
</dbReference>
<dbReference type="HPA" id="ENSG00000277858">
    <property type="expression patterns" value="Tissue enriched (testis)"/>
</dbReference>
<dbReference type="MIM" id="300445">
    <property type="type" value="gene"/>
</dbReference>
<dbReference type="MIM" id="301038">
    <property type="type" value="gene"/>
</dbReference>
<dbReference type="neXtProt" id="NX_P0C5Z0"/>
<dbReference type="VEuPathDB" id="HostDB:ENSG00000277745"/>
<dbReference type="VEuPathDB" id="HostDB:ENSG00000277858"/>
<dbReference type="eggNOG" id="KOG1756">
    <property type="taxonomic scope" value="Eukaryota"/>
</dbReference>
<dbReference type="GeneTree" id="ENSGT00940000163020"/>
<dbReference type="HOGENOM" id="CLU_062828_3_2_1"/>
<dbReference type="InParanoid" id="P0C5Z0"/>
<dbReference type="OMA" id="GNEARNC"/>
<dbReference type="OrthoDB" id="9537859at2759"/>
<dbReference type="PAN-GO" id="P0C5Z0">
    <property type="GO annotations" value="1 GO annotation based on evolutionary models"/>
</dbReference>
<dbReference type="PhylomeDB" id="P0C5Z0"/>
<dbReference type="TreeFam" id="TF300137"/>
<dbReference type="PathwayCommons" id="P0C5Z0"/>
<dbReference type="SignaLink" id="P0C5Z0"/>
<dbReference type="SIGNOR" id="P0C5Z0"/>
<dbReference type="BioGRID-ORCS" id="474381">
    <property type="hits" value="21 hits in 626 CRISPR screens"/>
</dbReference>
<dbReference type="BioGRID-ORCS" id="83740">
    <property type="hits" value="48 hits in 634 CRISPR screens"/>
</dbReference>
<dbReference type="GeneWiki" id="H2AFB2"/>
<dbReference type="GeneWiki" id="H2AFB3"/>
<dbReference type="Pharos" id="P0C5Z0">
    <property type="development level" value="Tdark"/>
</dbReference>
<dbReference type="PRO" id="PR:P0C5Z0"/>
<dbReference type="Proteomes" id="UP000005640">
    <property type="component" value="Chromosome X"/>
</dbReference>
<dbReference type="RNAct" id="P0C5Z0">
    <property type="molecule type" value="protein"/>
</dbReference>
<dbReference type="Bgee" id="ENSG00000277745">
    <property type="expression patterns" value="Expressed in primordial germ cell in gonad and 75 other cell types or tissues"/>
</dbReference>
<dbReference type="GO" id="GO:0000791">
    <property type="term" value="C:euchromatin"/>
    <property type="evidence" value="ECO:0000314"/>
    <property type="project" value="UniProtKB"/>
</dbReference>
<dbReference type="GO" id="GO:0000786">
    <property type="term" value="C:nucleosome"/>
    <property type="evidence" value="ECO:0000314"/>
    <property type="project" value="UniProtKB"/>
</dbReference>
<dbReference type="GO" id="GO:0005634">
    <property type="term" value="C:nucleus"/>
    <property type="evidence" value="ECO:0007005"/>
    <property type="project" value="UniProtKB"/>
</dbReference>
<dbReference type="GO" id="GO:0003677">
    <property type="term" value="F:DNA binding"/>
    <property type="evidence" value="ECO:0007669"/>
    <property type="project" value="UniProtKB-KW"/>
</dbReference>
<dbReference type="GO" id="GO:0046982">
    <property type="term" value="F:protein heterodimerization activity"/>
    <property type="evidence" value="ECO:0007669"/>
    <property type="project" value="InterPro"/>
</dbReference>
<dbReference type="GO" id="GO:0030527">
    <property type="term" value="F:structural constituent of chromatin"/>
    <property type="evidence" value="ECO:0000318"/>
    <property type="project" value="GO_Central"/>
</dbReference>
<dbReference type="GO" id="GO:0031507">
    <property type="term" value="P:heterochromatin formation"/>
    <property type="evidence" value="ECO:0000318"/>
    <property type="project" value="GO_Central"/>
</dbReference>
<dbReference type="GO" id="GO:0006397">
    <property type="term" value="P:mRNA processing"/>
    <property type="evidence" value="ECO:0000315"/>
    <property type="project" value="UniProtKB"/>
</dbReference>
<dbReference type="GO" id="GO:0006334">
    <property type="term" value="P:nucleosome assembly"/>
    <property type="evidence" value="ECO:0000314"/>
    <property type="project" value="UniProtKB"/>
</dbReference>
<dbReference type="CDD" id="cd00074">
    <property type="entry name" value="HFD_H2A"/>
    <property type="match status" value="1"/>
</dbReference>
<dbReference type="FunFam" id="1.10.20.10:FF:000097">
    <property type="entry name" value="Histone H2A"/>
    <property type="match status" value="1"/>
</dbReference>
<dbReference type="Gene3D" id="1.10.20.10">
    <property type="entry name" value="Histone, subunit A"/>
    <property type="match status" value="1"/>
</dbReference>
<dbReference type="InterPro" id="IPR009072">
    <property type="entry name" value="Histone-fold"/>
</dbReference>
<dbReference type="InterPro" id="IPR002119">
    <property type="entry name" value="Histone_H2A"/>
</dbReference>
<dbReference type="PANTHER" id="PTHR23430">
    <property type="entry name" value="HISTONE H2A"/>
    <property type="match status" value="1"/>
</dbReference>
<dbReference type="PRINTS" id="PR00620">
    <property type="entry name" value="HISTONEH2A"/>
</dbReference>
<dbReference type="SMART" id="SM00414">
    <property type="entry name" value="H2A"/>
    <property type="match status" value="1"/>
</dbReference>
<dbReference type="SUPFAM" id="SSF47113">
    <property type="entry name" value="Histone-fold"/>
    <property type="match status" value="1"/>
</dbReference>
<organism>
    <name type="scientific">Homo sapiens</name>
    <name type="common">Human</name>
    <dbReference type="NCBI Taxonomy" id="9606"/>
    <lineage>
        <taxon>Eukaryota</taxon>
        <taxon>Metazoa</taxon>
        <taxon>Chordata</taxon>
        <taxon>Craniata</taxon>
        <taxon>Vertebrata</taxon>
        <taxon>Euteleostomi</taxon>
        <taxon>Mammalia</taxon>
        <taxon>Eutheria</taxon>
        <taxon>Euarchontoglires</taxon>
        <taxon>Primates</taxon>
        <taxon>Haplorrhini</taxon>
        <taxon>Catarrhini</taxon>
        <taxon>Hominidae</taxon>
        <taxon>Homo</taxon>
    </lineage>
</organism>
<keyword id="KW-0002">3D-structure</keyword>
<keyword id="KW-0158">Chromosome</keyword>
<keyword id="KW-0238">DNA-binding</keyword>
<keyword id="KW-0507">mRNA processing</keyword>
<keyword id="KW-0544">Nucleosome core</keyword>
<keyword id="KW-0539">Nucleus</keyword>
<keyword id="KW-1185">Reference proteome</keyword>